<name>NCMP_SACSY</name>
<keyword id="KW-0045">Antibiotic biosynthesis</keyword>
<keyword id="KW-0489">Methyltransferase</keyword>
<keyword id="KW-1185">Reference proteome</keyword>
<keyword id="KW-0949">S-adenosyl-L-methionine</keyword>
<keyword id="KW-0808">Transferase</keyword>
<dbReference type="EC" id="2.1.1.351" evidence="1"/>
<dbReference type="EMBL" id="KY287782">
    <property type="protein sequence ID" value="ARS01468.1"/>
    <property type="molecule type" value="Genomic_DNA"/>
</dbReference>
<dbReference type="EMBL" id="CP034550">
    <property type="protein sequence ID" value="QFZ24352.1"/>
    <property type="status" value="ALT_INIT"/>
    <property type="molecule type" value="Genomic_DNA"/>
</dbReference>
<dbReference type="SMR" id="A0A1X9WEP1"/>
<dbReference type="KEGG" id="ag:ARS01468"/>
<dbReference type="KEGG" id="ssyi:EKG83_19125"/>
<dbReference type="BioCyc" id="MetaCyc:MONOMER-20309"/>
<dbReference type="BRENDA" id="2.1.1.351">
    <property type="organism ID" value="16293"/>
</dbReference>
<dbReference type="Proteomes" id="UP000325787">
    <property type="component" value="Chromosome"/>
</dbReference>
<dbReference type="GO" id="GO:0008168">
    <property type="term" value="F:methyltransferase activity"/>
    <property type="evidence" value="ECO:0007669"/>
    <property type="project" value="UniProtKB-KW"/>
</dbReference>
<dbReference type="GO" id="GO:0017000">
    <property type="term" value="P:antibiotic biosynthetic process"/>
    <property type="evidence" value="ECO:0007669"/>
    <property type="project" value="UniProtKB-KW"/>
</dbReference>
<dbReference type="GO" id="GO:0032259">
    <property type="term" value="P:methylation"/>
    <property type="evidence" value="ECO:0007669"/>
    <property type="project" value="UniProtKB-KW"/>
</dbReference>
<dbReference type="CDD" id="cd02440">
    <property type="entry name" value="AdoMet_MTases"/>
    <property type="match status" value="1"/>
</dbReference>
<dbReference type="Gene3D" id="3.40.50.150">
    <property type="entry name" value="Vaccinia Virus protein VP39"/>
    <property type="match status" value="1"/>
</dbReference>
<dbReference type="InterPro" id="IPR041698">
    <property type="entry name" value="Methyltransf_25"/>
</dbReference>
<dbReference type="InterPro" id="IPR029063">
    <property type="entry name" value="SAM-dependent_MTases_sf"/>
</dbReference>
<dbReference type="PANTHER" id="PTHR43591">
    <property type="entry name" value="METHYLTRANSFERASE"/>
    <property type="match status" value="1"/>
</dbReference>
<dbReference type="PANTHER" id="PTHR43591:SF99">
    <property type="entry name" value="OS06G0646000 PROTEIN"/>
    <property type="match status" value="1"/>
</dbReference>
<dbReference type="Pfam" id="PF13649">
    <property type="entry name" value="Methyltransf_25"/>
    <property type="match status" value="1"/>
</dbReference>
<dbReference type="SUPFAM" id="SSF53335">
    <property type="entry name" value="S-adenosyl-L-methionine-dependent methyltransferases"/>
    <property type="match status" value="1"/>
</dbReference>
<comment type="function">
    <text evidence="1">Involved in the biosynthesis of nocamycin I and nocamycin II (PubMed:28818448). Catalyzes the methylation of nocamycin E to yield nocamycin I (PubMed:28818448).</text>
</comment>
<comment type="catalytic activity">
    <reaction evidence="1">
        <text>nocamycin E + S-adenosyl-L-methionine = nocamycin I + S-adenosyl-L-homocysteine</text>
        <dbReference type="Rhea" id="RHEA:56844"/>
        <dbReference type="ChEBI" id="CHEBI:57856"/>
        <dbReference type="ChEBI" id="CHEBI:59789"/>
        <dbReference type="ChEBI" id="CHEBI:141048"/>
        <dbReference type="ChEBI" id="CHEBI:141049"/>
        <dbReference type="EC" id="2.1.1.351"/>
    </reaction>
    <physiologicalReaction direction="left-to-right" evidence="1">
        <dbReference type="Rhea" id="RHEA:56845"/>
    </physiologicalReaction>
</comment>
<comment type="pathway">
    <text evidence="1">Antibiotic biosynthesis.</text>
</comment>
<comment type="disruption phenotype">
    <text evidence="1">Mutant loses the capability to produce nocamycin I and nocamycin II. Mutant produces a new nocamycin intermediate, 21-demethyl-nocamycin I, which was designated as nocamycin E.</text>
</comment>
<comment type="similarity">
    <text evidence="3">Belongs to the methyltransferase superfamily.</text>
</comment>
<comment type="sequence caution" evidence="3">
    <conflict type="erroneous initiation">
        <sequence resource="EMBL-CDS" id="QFZ24352"/>
    </conflict>
    <text>Extended N-terminus.</text>
</comment>
<protein>
    <recommendedName>
        <fullName evidence="3">Nocamycin O-methyltransferase</fullName>
        <ecNumber evidence="1">2.1.1.351</ecNumber>
    </recommendedName>
    <alternativeName>
        <fullName evidence="2">Carboxylate O-methyltransferase</fullName>
    </alternativeName>
</protein>
<accession>A0A1X9WEP1</accession>
<accession>A0A5Q0HFI8</accession>
<feature type="chain" id="PRO_0000452109" description="Nocamycin O-methyltransferase">
    <location>
        <begin position="1"/>
        <end position="280"/>
    </location>
</feature>
<reference key="1">
    <citation type="journal article" date="2017" name="Microb. Cell Fact.">
        <title>Identification of nocamycin biosynthetic gene cluster from Saccharothrix syringae NRRL B-16468 and generation of new nocamycin derivatives by manipulating gene cluster.</title>
        <authorList>
            <person name="Mo X."/>
            <person name="Shi C."/>
            <person name="Gui C."/>
            <person name="Zhang Y."/>
            <person name="Ju J."/>
            <person name="Wang Q."/>
        </authorList>
    </citation>
    <scope>NUCLEOTIDE SEQUENCE [GENOMIC DNA]</scope>
    <source>
        <strain>ATCC 51364 / DSM 43886 / JCM 6844 / KCTC 9398 / NBRC 14523 / NRRL B-16468 / INA 2240</strain>
    </source>
</reference>
<reference key="2">
    <citation type="journal article" date="2021" name="Curr. Microbiol.">
        <title>Complete genome of nocamycin-producing strain Saccharothrix syringae NRRL B-16468 reveals the biosynthetic potential for secondary metabolites.</title>
        <authorList>
            <person name="Mo X."/>
            <person name="Yang S."/>
        </authorList>
    </citation>
    <scope>NUCLEOTIDE SEQUENCE [LARGE SCALE GENOMIC DNA]</scope>
    <source>
        <strain>ATCC 51364 / DSM 43886 / JCM 6844 / KCTC 9398 / NBRC 14523 / NRRL B-16468 / INA 2240</strain>
    </source>
</reference>
<reference key="3">
    <citation type="journal article" date="2017" name="Bioorg. Med. Chem. Lett.">
        <title>Elucidation of a carboxylate O-methyltransferase NcmP in nocamycin biosynthetic pathway.</title>
        <authorList>
            <person name="Mo X."/>
            <person name="Gui C."/>
            <person name="Wang Q."/>
        </authorList>
    </citation>
    <scope>FUNCTION</scope>
    <scope>CATALYTIC ACTIVITY</scope>
    <scope>PATHWAY</scope>
    <scope>DISRUPTION PHENOTYPE</scope>
    <source>
        <strain>ATCC 51364 / DSM 43886 / JCM 6844 / KCTC 9398 / NBRC 14523 / NRRL B-16468 / INA 2240</strain>
    </source>
</reference>
<proteinExistence type="evidence at protein level"/>
<sequence>MVFDRLAGIYDATGVEFFRPVARRLLDLVDPRPGVDLLDVGCGRGAVLFPAAERVGPGGTVVGIDIAEPMVRATAAEAAERGLGTVSVRLGDGADPAFPAGSFDVVTASMSAALFPDLPAVAARYARLLRPDGRIGLTGPVPPPSLREWALGPLRVGAVVDAIAPEAVAATHPRIAALLGAHPFGAPGAVADALRAAGFVEVRELHEDLELRAPSAEALVGWTWSNGLRVYWELVEPDRRAAVAAELVRDLTAHAAGGPITATYPVAYVTGRLRPAGGTP</sequence>
<evidence type="ECO:0000269" key="1">
    <source>
    </source>
</evidence>
<evidence type="ECO:0000303" key="2">
    <source>
    </source>
</evidence>
<evidence type="ECO:0000305" key="3"/>
<evidence type="ECO:0000312" key="4">
    <source>
        <dbReference type="EMBL" id="QFZ24352.1"/>
    </source>
</evidence>
<organism>
    <name type="scientific">Saccharothrix syringae</name>
    <name type="common">Nocardiopsis syringae</name>
    <dbReference type="NCBI Taxonomy" id="103733"/>
    <lineage>
        <taxon>Bacteria</taxon>
        <taxon>Bacillati</taxon>
        <taxon>Actinomycetota</taxon>
        <taxon>Actinomycetes</taxon>
        <taxon>Pseudonocardiales</taxon>
        <taxon>Pseudonocardiaceae</taxon>
        <taxon>Saccharothrix</taxon>
    </lineage>
</organism>
<gene>
    <name evidence="2" type="primary">ncmP</name>
    <name evidence="4" type="ORF">EKG83_19125</name>
</gene>